<reference key="1">
    <citation type="submission" date="2007-04" db="EMBL/GenBank/DDBJ databases">
        <title>Complete sequence of Shewanella putrefaciens CN-32.</title>
        <authorList>
            <consortium name="US DOE Joint Genome Institute"/>
            <person name="Copeland A."/>
            <person name="Lucas S."/>
            <person name="Lapidus A."/>
            <person name="Barry K."/>
            <person name="Detter J.C."/>
            <person name="Glavina del Rio T."/>
            <person name="Hammon N."/>
            <person name="Israni S."/>
            <person name="Dalin E."/>
            <person name="Tice H."/>
            <person name="Pitluck S."/>
            <person name="Chain P."/>
            <person name="Malfatti S."/>
            <person name="Shin M."/>
            <person name="Vergez L."/>
            <person name="Schmutz J."/>
            <person name="Larimer F."/>
            <person name="Land M."/>
            <person name="Hauser L."/>
            <person name="Kyrpides N."/>
            <person name="Mikhailova N."/>
            <person name="Romine M.F."/>
            <person name="Fredrickson J."/>
            <person name="Tiedje J."/>
            <person name="Richardson P."/>
        </authorList>
    </citation>
    <scope>NUCLEOTIDE SEQUENCE [LARGE SCALE GENOMIC DNA]</scope>
    <source>
        <strain>CN-32 / ATCC BAA-453</strain>
    </source>
</reference>
<gene>
    <name evidence="1" type="primary">secA</name>
    <name type="ordered locus">Sputcn32_0495</name>
</gene>
<evidence type="ECO:0000255" key="1">
    <source>
        <dbReference type="HAMAP-Rule" id="MF_01382"/>
    </source>
</evidence>
<evidence type="ECO:0000256" key="2">
    <source>
        <dbReference type="SAM" id="MobiDB-lite"/>
    </source>
</evidence>
<feature type="chain" id="PRO_0000320996" description="Protein translocase subunit SecA">
    <location>
        <begin position="1"/>
        <end position="909"/>
    </location>
</feature>
<feature type="region of interest" description="Disordered" evidence="2">
    <location>
        <begin position="863"/>
        <end position="909"/>
    </location>
</feature>
<feature type="compositionally biased region" description="Basic and acidic residues" evidence="2">
    <location>
        <begin position="880"/>
        <end position="889"/>
    </location>
</feature>
<feature type="compositionally biased region" description="Basic residues" evidence="2">
    <location>
        <begin position="899"/>
        <end position="909"/>
    </location>
</feature>
<feature type="binding site" evidence="1">
    <location>
        <position position="87"/>
    </location>
    <ligand>
        <name>ATP</name>
        <dbReference type="ChEBI" id="CHEBI:30616"/>
    </ligand>
</feature>
<feature type="binding site" evidence="1">
    <location>
        <begin position="105"/>
        <end position="109"/>
    </location>
    <ligand>
        <name>ATP</name>
        <dbReference type="ChEBI" id="CHEBI:30616"/>
    </ligand>
</feature>
<feature type="binding site" evidence="1">
    <location>
        <position position="512"/>
    </location>
    <ligand>
        <name>ATP</name>
        <dbReference type="ChEBI" id="CHEBI:30616"/>
    </ligand>
</feature>
<feature type="binding site" evidence="1">
    <location>
        <position position="893"/>
    </location>
    <ligand>
        <name>Zn(2+)</name>
        <dbReference type="ChEBI" id="CHEBI:29105"/>
    </ligand>
</feature>
<feature type="binding site" evidence="1">
    <location>
        <position position="895"/>
    </location>
    <ligand>
        <name>Zn(2+)</name>
        <dbReference type="ChEBI" id="CHEBI:29105"/>
    </ligand>
</feature>
<feature type="binding site" evidence="1">
    <location>
        <position position="904"/>
    </location>
    <ligand>
        <name>Zn(2+)</name>
        <dbReference type="ChEBI" id="CHEBI:29105"/>
    </ligand>
</feature>
<feature type="binding site" evidence="1">
    <location>
        <position position="905"/>
    </location>
    <ligand>
        <name>Zn(2+)</name>
        <dbReference type="ChEBI" id="CHEBI:29105"/>
    </ligand>
</feature>
<name>SECA_SHEPC</name>
<dbReference type="EC" id="7.4.2.8" evidence="1"/>
<dbReference type="EMBL" id="CP000681">
    <property type="protein sequence ID" value="ABP74227.1"/>
    <property type="molecule type" value="Genomic_DNA"/>
</dbReference>
<dbReference type="SMR" id="A4Y2P4"/>
<dbReference type="STRING" id="319224.Sputcn32_0495"/>
<dbReference type="KEGG" id="spc:Sputcn32_0495"/>
<dbReference type="eggNOG" id="COG0653">
    <property type="taxonomic scope" value="Bacteria"/>
</dbReference>
<dbReference type="HOGENOM" id="CLU_005314_3_0_6"/>
<dbReference type="GO" id="GO:0031522">
    <property type="term" value="C:cell envelope Sec protein transport complex"/>
    <property type="evidence" value="ECO:0007669"/>
    <property type="project" value="TreeGrafter"/>
</dbReference>
<dbReference type="GO" id="GO:0005829">
    <property type="term" value="C:cytosol"/>
    <property type="evidence" value="ECO:0007669"/>
    <property type="project" value="TreeGrafter"/>
</dbReference>
<dbReference type="GO" id="GO:0005886">
    <property type="term" value="C:plasma membrane"/>
    <property type="evidence" value="ECO:0007669"/>
    <property type="project" value="UniProtKB-SubCell"/>
</dbReference>
<dbReference type="GO" id="GO:0005524">
    <property type="term" value="F:ATP binding"/>
    <property type="evidence" value="ECO:0007669"/>
    <property type="project" value="UniProtKB-UniRule"/>
</dbReference>
<dbReference type="GO" id="GO:0046872">
    <property type="term" value="F:metal ion binding"/>
    <property type="evidence" value="ECO:0007669"/>
    <property type="project" value="UniProtKB-KW"/>
</dbReference>
<dbReference type="GO" id="GO:0008564">
    <property type="term" value="F:protein-exporting ATPase activity"/>
    <property type="evidence" value="ECO:0007669"/>
    <property type="project" value="UniProtKB-EC"/>
</dbReference>
<dbReference type="GO" id="GO:0065002">
    <property type="term" value="P:intracellular protein transmembrane transport"/>
    <property type="evidence" value="ECO:0007669"/>
    <property type="project" value="UniProtKB-UniRule"/>
</dbReference>
<dbReference type="GO" id="GO:0017038">
    <property type="term" value="P:protein import"/>
    <property type="evidence" value="ECO:0007669"/>
    <property type="project" value="InterPro"/>
</dbReference>
<dbReference type="GO" id="GO:0006605">
    <property type="term" value="P:protein targeting"/>
    <property type="evidence" value="ECO:0007669"/>
    <property type="project" value="UniProtKB-UniRule"/>
</dbReference>
<dbReference type="GO" id="GO:0043952">
    <property type="term" value="P:protein transport by the Sec complex"/>
    <property type="evidence" value="ECO:0007669"/>
    <property type="project" value="TreeGrafter"/>
</dbReference>
<dbReference type="CDD" id="cd17928">
    <property type="entry name" value="DEXDc_SecA"/>
    <property type="match status" value="1"/>
</dbReference>
<dbReference type="CDD" id="cd18803">
    <property type="entry name" value="SF2_C_secA"/>
    <property type="match status" value="1"/>
</dbReference>
<dbReference type="FunFam" id="1.10.3060.10:FF:000001">
    <property type="entry name" value="Preprotein translocase subunit SecA"/>
    <property type="match status" value="1"/>
</dbReference>
<dbReference type="FunFam" id="3.40.50.300:FF:000081">
    <property type="entry name" value="Preprotein translocase subunit SecA"/>
    <property type="match status" value="1"/>
</dbReference>
<dbReference type="FunFam" id="3.40.50.300:FF:000113">
    <property type="entry name" value="Preprotein translocase subunit SecA"/>
    <property type="match status" value="1"/>
</dbReference>
<dbReference type="FunFam" id="3.90.1440.10:FF:000001">
    <property type="entry name" value="Preprotein translocase subunit SecA"/>
    <property type="match status" value="1"/>
</dbReference>
<dbReference type="Gene3D" id="1.10.3060.10">
    <property type="entry name" value="Helical scaffold and wing domains of SecA"/>
    <property type="match status" value="1"/>
</dbReference>
<dbReference type="Gene3D" id="3.40.50.300">
    <property type="entry name" value="P-loop containing nucleotide triphosphate hydrolases"/>
    <property type="match status" value="2"/>
</dbReference>
<dbReference type="Gene3D" id="3.90.1440.10">
    <property type="entry name" value="SecA, preprotein cross-linking domain"/>
    <property type="match status" value="1"/>
</dbReference>
<dbReference type="HAMAP" id="MF_01382">
    <property type="entry name" value="SecA"/>
    <property type="match status" value="1"/>
</dbReference>
<dbReference type="InterPro" id="IPR014001">
    <property type="entry name" value="Helicase_ATP-bd"/>
</dbReference>
<dbReference type="InterPro" id="IPR001650">
    <property type="entry name" value="Helicase_C-like"/>
</dbReference>
<dbReference type="InterPro" id="IPR027417">
    <property type="entry name" value="P-loop_NTPase"/>
</dbReference>
<dbReference type="InterPro" id="IPR004027">
    <property type="entry name" value="SEC_C_motif"/>
</dbReference>
<dbReference type="InterPro" id="IPR000185">
    <property type="entry name" value="SecA"/>
</dbReference>
<dbReference type="InterPro" id="IPR020937">
    <property type="entry name" value="SecA_CS"/>
</dbReference>
<dbReference type="InterPro" id="IPR011115">
    <property type="entry name" value="SecA_DEAD"/>
</dbReference>
<dbReference type="InterPro" id="IPR014018">
    <property type="entry name" value="SecA_motor_DEAD"/>
</dbReference>
<dbReference type="InterPro" id="IPR011130">
    <property type="entry name" value="SecA_preprotein_X-link_dom"/>
</dbReference>
<dbReference type="InterPro" id="IPR044722">
    <property type="entry name" value="SecA_SF2_C"/>
</dbReference>
<dbReference type="InterPro" id="IPR011116">
    <property type="entry name" value="SecA_Wing/Scaffold"/>
</dbReference>
<dbReference type="InterPro" id="IPR036266">
    <property type="entry name" value="SecA_Wing/Scaffold_sf"/>
</dbReference>
<dbReference type="InterPro" id="IPR036670">
    <property type="entry name" value="SecA_X-link_sf"/>
</dbReference>
<dbReference type="NCBIfam" id="NF009538">
    <property type="entry name" value="PRK12904.1"/>
    <property type="match status" value="1"/>
</dbReference>
<dbReference type="NCBIfam" id="TIGR00963">
    <property type="entry name" value="secA"/>
    <property type="match status" value="1"/>
</dbReference>
<dbReference type="PANTHER" id="PTHR30612:SF0">
    <property type="entry name" value="CHLOROPLAST PROTEIN-TRANSPORTING ATPASE"/>
    <property type="match status" value="1"/>
</dbReference>
<dbReference type="PANTHER" id="PTHR30612">
    <property type="entry name" value="SECA INNER MEMBRANE COMPONENT OF SEC PROTEIN SECRETION SYSTEM"/>
    <property type="match status" value="1"/>
</dbReference>
<dbReference type="Pfam" id="PF21090">
    <property type="entry name" value="P-loop_SecA"/>
    <property type="match status" value="1"/>
</dbReference>
<dbReference type="Pfam" id="PF02810">
    <property type="entry name" value="SEC-C"/>
    <property type="match status" value="1"/>
</dbReference>
<dbReference type="Pfam" id="PF07517">
    <property type="entry name" value="SecA_DEAD"/>
    <property type="match status" value="1"/>
</dbReference>
<dbReference type="Pfam" id="PF01043">
    <property type="entry name" value="SecA_PP_bind"/>
    <property type="match status" value="1"/>
</dbReference>
<dbReference type="Pfam" id="PF07516">
    <property type="entry name" value="SecA_SW"/>
    <property type="match status" value="1"/>
</dbReference>
<dbReference type="PRINTS" id="PR00906">
    <property type="entry name" value="SECA"/>
</dbReference>
<dbReference type="SMART" id="SM00957">
    <property type="entry name" value="SecA_DEAD"/>
    <property type="match status" value="1"/>
</dbReference>
<dbReference type="SMART" id="SM00958">
    <property type="entry name" value="SecA_PP_bind"/>
    <property type="match status" value="1"/>
</dbReference>
<dbReference type="SUPFAM" id="SSF81886">
    <property type="entry name" value="Helical scaffold and wing domains of SecA"/>
    <property type="match status" value="1"/>
</dbReference>
<dbReference type="SUPFAM" id="SSF52540">
    <property type="entry name" value="P-loop containing nucleoside triphosphate hydrolases"/>
    <property type="match status" value="2"/>
</dbReference>
<dbReference type="SUPFAM" id="SSF81767">
    <property type="entry name" value="Pre-protein crosslinking domain of SecA"/>
    <property type="match status" value="1"/>
</dbReference>
<dbReference type="PROSITE" id="PS01312">
    <property type="entry name" value="SECA"/>
    <property type="match status" value="1"/>
</dbReference>
<dbReference type="PROSITE" id="PS51196">
    <property type="entry name" value="SECA_MOTOR_DEAD"/>
    <property type="match status" value="1"/>
</dbReference>
<comment type="function">
    <text evidence="1">Part of the Sec protein translocase complex. Interacts with the SecYEG preprotein conducting channel. Has a central role in coupling the hydrolysis of ATP to the transfer of proteins into and across the cell membrane, serving both as a receptor for the preprotein-SecB complex and as an ATP-driven molecular motor driving the stepwise translocation of polypeptide chains across the membrane.</text>
</comment>
<comment type="catalytic activity">
    <reaction evidence="1">
        <text>ATP + H2O + cellular proteinSide 1 = ADP + phosphate + cellular proteinSide 2.</text>
        <dbReference type="EC" id="7.4.2.8"/>
    </reaction>
</comment>
<comment type="cofactor">
    <cofactor evidence="1">
        <name>Zn(2+)</name>
        <dbReference type="ChEBI" id="CHEBI:29105"/>
    </cofactor>
    <text evidence="1">May bind 1 zinc ion per subunit.</text>
</comment>
<comment type="subunit">
    <text evidence="1">Monomer and homodimer. Part of the essential Sec protein translocation apparatus which comprises SecA, SecYEG and auxiliary proteins SecDF-YajC and YidC.</text>
</comment>
<comment type="subcellular location">
    <subcellularLocation>
        <location evidence="1">Cell inner membrane</location>
        <topology evidence="1">Peripheral membrane protein</topology>
        <orientation evidence="1">Cytoplasmic side</orientation>
    </subcellularLocation>
    <subcellularLocation>
        <location evidence="1">Cytoplasm</location>
    </subcellularLocation>
    <text evidence="1">Distribution is 50-50.</text>
</comment>
<comment type="similarity">
    <text evidence="1">Belongs to the SecA family.</text>
</comment>
<organism>
    <name type="scientific">Shewanella putrefaciens (strain CN-32 / ATCC BAA-453)</name>
    <dbReference type="NCBI Taxonomy" id="319224"/>
    <lineage>
        <taxon>Bacteria</taxon>
        <taxon>Pseudomonadati</taxon>
        <taxon>Pseudomonadota</taxon>
        <taxon>Gammaproteobacteria</taxon>
        <taxon>Alteromonadales</taxon>
        <taxon>Shewanellaceae</taxon>
        <taxon>Shewanella</taxon>
    </lineage>
</organism>
<accession>A4Y2P4</accession>
<protein>
    <recommendedName>
        <fullName evidence="1">Protein translocase subunit SecA</fullName>
        <ecNumber evidence="1">7.4.2.8</ecNumber>
    </recommendedName>
</protein>
<proteinExistence type="inferred from homology"/>
<keyword id="KW-0067">ATP-binding</keyword>
<keyword id="KW-0997">Cell inner membrane</keyword>
<keyword id="KW-1003">Cell membrane</keyword>
<keyword id="KW-0963">Cytoplasm</keyword>
<keyword id="KW-0472">Membrane</keyword>
<keyword id="KW-0479">Metal-binding</keyword>
<keyword id="KW-0547">Nucleotide-binding</keyword>
<keyword id="KW-0653">Protein transport</keyword>
<keyword id="KW-1278">Translocase</keyword>
<keyword id="KW-0811">Translocation</keyword>
<keyword id="KW-0813">Transport</keyword>
<keyword id="KW-0862">Zinc</keyword>
<sequence>MFGKLLTKVFGSRNDRTLKGLQKVVIKINALEADYEKLTDEELKAKTAEFRERLAAGETLDDIMAEAFATVREASKRVFEMRHFDVQLLGGMVLDSNRIAEMRTGEGKTLTATLPAYLNALTGKGVHVITVNDYLARRDAENNRPLFEFLGLTVGINVAGIGQQEKKAAYNADITYGTNNEFGFDYLRDNMAFSPQDRVQRPLHYALIDEVDSILIDEARTPLIISGAAEDSSELYTKINTLIPNLIRQDKEDSEEYVGEGDYSIDEKAKQVHFTERGQEKVENLLIERGMLAEGDSLYSAANISLLHHVNAALRAHTLFERDVDYIVQDGEVIIVDEHTGRTMPGRRWSEGLHQAVEAKEGVHIQNENQTLASITFQNYFRQYEKLAGMTGTADTEAFEFQHIYGLDTVVVPTNRPMVRKDMADLVYLTANEKYQAIIKDIKDCRERGQPVLVGTVSIEQSELLARLMVQEKIPHQVLNAKFHEKEAEIVAQAGRTGAVTIATNMAGRGTDIVLGGNWNMEIDALDNPTPEQKAKIKADWQVRHDAVVAAGGLHILGTERHESRRIDNQLRGRAGRQGDAGSSRFYLSMEDSLMRIFASDRVSGMMKKLGMEEGEAIEHPWVSRAIENAQRKVEARNFDIRKQLLEFDDVANDQRQVVYAQRNELMDAESIEDTIKNIQDDVIGAVIDQYIPPQSVEELWDVPGLEQRLNQEFMLKLPIQEWLDKEDDLHEESLRERIITSWSDAYKAKEEMVGASVLRQFEKAVMLQTLDGLWKEHLAAMDHLRQGIHLRGYAQKNPKQEYKRESFELFQQLLNTLKHDVISVLSKVQVQAQSDVEEMEARRREEDAKIQRDYQHAAAEALVGGGDEDDESIAAHTPMIRDGDKVGRNDPCPCGSGRKYKQCHGKLS</sequence>